<protein>
    <recommendedName>
        <fullName evidence="1">Small ribosomal subunit protein bS20</fullName>
    </recommendedName>
    <alternativeName>
        <fullName evidence="3">30S ribosomal protein S20</fullName>
    </alternativeName>
</protein>
<accession>Q62M74</accession>
<name>RS20_BURMA</name>
<keyword id="KW-1185">Reference proteome</keyword>
<keyword id="KW-0687">Ribonucleoprotein</keyword>
<keyword id="KW-0689">Ribosomal protein</keyword>
<keyword id="KW-0694">RNA-binding</keyword>
<keyword id="KW-0699">rRNA-binding</keyword>
<dbReference type="EMBL" id="CP000010">
    <property type="protein sequence ID" value="AAU49188.1"/>
    <property type="molecule type" value="Genomic_DNA"/>
</dbReference>
<dbReference type="RefSeq" id="WP_004189743.1">
    <property type="nucleotide sequence ID" value="NC_006348.1"/>
</dbReference>
<dbReference type="RefSeq" id="YP_102194.1">
    <property type="nucleotide sequence ID" value="NC_006348.1"/>
</dbReference>
<dbReference type="SMR" id="Q62M74"/>
<dbReference type="GeneID" id="93059378"/>
<dbReference type="KEGG" id="bma:BMA0377"/>
<dbReference type="PATRIC" id="fig|243160.12.peg.380"/>
<dbReference type="eggNOG" id="COG0268">
    <property type="taxonomic scope" value="Bacteria"/>
</dbReference>
<dbReference type="HOGENOM" id="CLU_160655_4_0_4"/>
<dbReference type="Proteomes" id="UP000006693">
    <property type="component" value="Chromosome 1"/>
</dbReference>
<dbReference type="GO" id="GO:0005829">
    <property type="term" value="C:cytosol"/>
    <property type="evidence" value="ECO:0007669"/>
    <property type="project" value="TreeGrafter"/>
</dbReference>
<dbReference type="GO" id="GO:0015935">
    <property type="term" value="C:small ribosomal subunit"/>
    <property type="evidence" value="ECO:0007669"/>
    <property type="project" value="TreeGrafter"/>
</dbReference>
<dbReference type="GO" id="GO:0070181">
    <property type="term" value="F:small ribosomal subunit rRNA binding"/>
    <property type="evidence" value="ECO:0007669"/>
    <property type="project" value="TreeGrafter"/>
</dbReference>
<dbReference type="GO" id="GO:0003735">
    <property type="term" value="F:structural constituent of ribosome"/>
    <property type="evidence" value="ECO:0007669"/>
    <property type="project" value="InterPro"/>
</dbReference>
<dbReference type="GO" id="GO:0006412">
    <property type="term" value="P:translation"/>
    <property type="evidence" value="ECO:0007669"/>
    <property type="project" value="UniProtKB-UniRule"/>
</dbReference>
<dbReference type="FunFam" id="1.20.58.110:FF:000001">
    <property type="entry name" value="30S ribosomal protein S20"/>
    <property type="match status" value="1"/>
</dbReference>
<dbReference type="Gene3D" id="1.20.58.110">
    <property type="entry name" value="Ribosomal protein S20"/>
    <property type="match status" value="1"/>
</dbReference>
<dbReference type="HAMAP" id="MF_00500">
    <property type="entry name" value="Ribosomal_bS20"/>
    <property type="match status" value="1"/>
</dbReference>
<dbReference type="InterPro" id="IPR002583">
    <property type="entry name" value="Ribosomal_bS20"/>
</dbReference>
<dbReference type="InterPro" id="IPR036510">
    <property type="entry name" value="Ribosomal_bS20_sf"/>
</dbReference>
<dbReference type="NCBIfam" id="TIGR00029">
    <property type="entry name" value="S20"/>
    <property type="match status" value="1"/>
</dbReference>
<dbReference type="PANTHER" id="PTHR33398">
    <property type="entry name" value="30S RIBOSOMAL PROTEIN S20"/>
    <property type="match status" value="1"/>
</dbReference>
<dbReference type="PANTHER" id="PTHR33398:SF1">
    <property type="entry name" value="SMALL RIBOSOMAL SUBUNIT PROTEIN BS20C"/>
    <property type="match status" value="1"/>
</dbReference>
<dbReference type="Pfam" id="PF01649">
    <property type="entry name" value="Ribosomal_S20p"/>
    <property type="match status" value="1"/>
</dbReference>
<dbReference type="SUPFAM" id="SSF46992">
    <property type="entry name" value="Ribosomal protein S20"/>
    <property type="match status" value="1"/>
</dbReference>
<evidence type="ECO:0000255" key="1">
    <source>
        <dbReference type="HAMAP-Rule" id="MF_00500"/>
    </source>
</evidence>
<evidence type="ECO:0000256" key="2">
    <source>
        <dbReference type="SAM" id="MobiDB-lite"/>
    </source>
</evidence>
<evidence type="ECO:0000305" key="3"/>
<gene>
    <name evidence="1" type="primary">rpsT</name>
    <name type="ordered locus">BMA0377</name>
</gene>
<sequence>MANSAQARKRARQAAKANSHNSALRSKFRTAIKAVRKAIDAGDQAKAAELFKAATKTIDTIADKKIVHKNKAARHKSRLSAAVKGLQAQAAQ</sequence>
<comment type="function">
    <text evidence="1">Binds directly to 16S ribosomal RNA.</text>
</comment>
<comment type="similarity">
    <text evidence="1">Belongs to the bacterial ribosomal protein bS20 family.</text>
</comment>
<reference key="1">
    <citation type="journal article" date="2004" name="Proc. Natl. Acad. Sci. U.S.A.">
        <title>Structural flexibility in the Burkholderia mallei genome.</title>
        <authorList>
            <person name="Nierman W.C."/>
            <person name="DeShazer D."/>
            <person name="Kim H.S."/>
            <person name="Tettelin H."/>
            <person name="Nelson K.E."/>
            <person name="Feldblyum T.V."/>
            <person name="Ulrich R.L."/>
            <person name="Ronning C.M."/>
            <person name="Brinkac L.M."/>
            <person name="Daugherty S.C."/>
            <person name="Davidsen T.D."/>
            <person name="DeBoy R.T."/>
            <person name="Dimitrov G."/>
            <person name="Dodson R.J."/>
            <person name="Durkin A.S."/>
            <person name="Gwinn M.L."/>
            <person name="Haft D.H."/>
            <person name="Khouri H.M."/>
            <person name="Kolonay J.F."/>
            <person name="Madupu R."/>
            <person name="Mohammoud Y."/>
            <person name="Nelson W.C."/>
            <person name="Radune D."/>
            <person name="Romero C.M."/>
            <person name="Sarria S."/>
            <person name="Selengut J."/>
            <person name="Shamblin C."/>
            <person name="Sullivan S.A."/>
            <person name="White O."/>
            <person name="Yu Y."/>
            <person name="Zafar N."/>
            <person name="Zhou L."/>
            <person name="Fraser C.M."/>
        </authorList>
    </citation>
    <scope>NUCLEOTIDE SEQUENCE [LARGE SCALE GENOMIC DNA]</scope>
    <source>
        <strain>ATCC 23344</strain>
    </source>
</reference>
<organism>
    <name type="scientific">Burkholderia mallei (strain ATCC 23344)</name>
    <dbReference type="NCBI Taxonomy" id="243160"/>
    <lineage>
        <taxon>Bacteria</taxon>
        <taxon>Pseudomonadati</taxon>
        <taxon>Pseudomonadota</taxon>
        <taxon>Betaproteobacteria</taxon>
        <taxon>Burkholderiales</taxon>
        <taxon>Burkholderiaceae</taxon>
        <taxon>Burkholderia</taxon>
        <taxon>pseudomallei group</taxon>
    </lineage>
</organism>
<feature type="chain" id="PRO_0000167937" description="Small ribosomal subunit protein bS20">
    <location>
        <begin position="1"/>
        <end position="92"/>
    </location>
</feature>
<feature type="region of interest" description="Disordered" evidence="2">
    <location>
        <begin position="1"/>
        <end position="25"/>
    </location>
</feature>
<proteinExistence type="inferred from homology"/>